<dbReference type="EC" id="1.11.1.21" evidence="1"/>
<dbReference type="EMBL" id="CP001110">
    <property type="protein sequence ID" value="ACF42456.1"/>
    <property type="molecule type" value="Genomic_DNA"/>
</dbReference>
<dbReference type="RefSeq" id="WP_012506954.1">
    <property type="nucleotide sequence ID" value="NC_011060.1"/>
</dbReference>
<dbReference type="SMR" id="B4SAT7"/>
<dbReference type="STRING" id="324925.Ppha_0100"/>
<dbReference type="PeroxiBase" id="2535">
    <property type="entry name" value="PphCP01"/>
</dbReference>
<dbReference type="KEGG" id="pph:Ppha_0100"/>
<dbReference type="eggNOG" id="COG0376">
    <property type="taxonomic scope" value="Bacteria"/>
</dbReference>
<dbReference type="HOGENOM" id="CLU_025424_2_0_10"/>
<dbReference type="OrthoDB" id="9759743at2"/>
<dbReference type="Proteomes" id="UP000002724">
    <property type="component" value="Chromosome"/>
</dbReference>
<dbReference type="GO" id="GO:0005829">
    <property type="term" value="C:cytosol"/>
    <property type="evidence" value="ECO:0007669"/>
    <property type="project" value="TreeGrafter"/>
</dbReference>
<dbReference type="GO" id="GO:0004096">
    <property type="term" value="F:catalase activity"/>
    <property type="evidence" value="ECO:0007669"/>
    <property type="project" value="UniProtKB-UniRule"/>
</dbReference>
<dbReference type="GO" id="GO:0020037">
    <property type="term" value="F:heme binding"/>
    <property type="evidence" value="ECO:0007669"/>
    <property type="project" value="InterPro"/>
</dbReference>
<dbReference type="GO" id="GO:0046872">
    <property type="term" value="F:metal ion binding"/>
    <property type="evidence" value="ECO:0007669"/>
    <property type="project" value="UniProtKB-KW"/>
</dbReference>
<dbReference type="GO" id="GO:0070301">
    <property type="term" value="P:cellular response to hydrogen peroxide"/>
    <property type="evidence" value="ECO:0007669"/>
    <property type="project" value="TreeGrafter"/>
</dbReference>
<dbReference type="GO" id="GO:0042744">
    <property type="term" value="P:hydrogen peroxide catabolic process"/>
    <property type="evidence" value="ECO:0007669"/>
    <property type="project" value="UniProtKB-KW"/>
</dbReference>
<dbReference type="CDD" id="cd00649">
    <property type="entry name" value="catalase_peroxidase_1"/>
    <property type="match status" value="1"/>
</dbReference>
<dbReference type="CDD" id="cd08200">
    <property type="entry name" value="catalase_peroxidase_2"/>
    <property type="match status" value="1"/>
</dbReference>
<dbReference type="FunFam" id="1.10.420.10:FF:000002">
    <property type="entry name" value="Catalase-peroxidase"/>
    <property type="match status" value="1"/>
</dbReference>
<dbReference type="FunFam" id="1.10.420.10:FF:000004">
    <property type="entry name" value="Catalase-peroxidase"/>
    <property type="match status" value="1"/>
</dbReference>
<dbReference type="FunFam" id="1.10.520.10:FF:000002">
    <property type="entry name" value="Catalase-peroxidase"/>
    <property type="match status" value="1"/>
</dbReference>
<dbReference type="Gene3D" id="1.10.520.10">
    <property type="match status" value="2"/>
</dbReference>
<dbReference type="Gene3D" id="1.10.420.10">
    <property type="entry name" value="Peroxidase, domain 2"/>
    <property type="match status" value="2"/>
</dbReference>
<dbReference type="HAMAP" id="MF_01961">
    <property type="entry name" value="Catal_peroxid"/>
    <property type="match status" value="1"/>
</dbReference>
<dbReference type="InterPro" id="IPR000763">
    <property type="entry name" value="Catalase_peroxidase"/>
</dbReference>
<dbReference type="InterPro" id="IPR002016">
    <property type="entry name" value="Haem_peroxidase"/>
</dbReference>
<dbReference type="InterPro" id="IPR010255">
    <property type="entry name" value="Haem_peroxidase_sf"/>
</dbReference>
<dbReference type="InterPro" id="IPR019794">
    <property type="entry name" value="Peroxidases_AS"/>
</dbReference>
<dbReference type="InterPro" id="IPR019793">
    <property type="entry name" value="Peroxidases_heam-ligand_BS"/>
</dbReference>
<dbReference type="NCBIfam" id="TIGR00198">
    <property type="entry name" value="cat_per_HPI"/>
    <property type="match status" value="1"/>
</dbReference>
<dbReference type="NCBIfam" id="NF011635">
    <property type="entry name" value="PRK15061.1"/>
    <property type="match status" value="1"/>
</dbReference>
<dbReference type="PANTHER" id="PTHR30555:SF0">
    <property type="entry name" value="CATALASE-PEROXIDASE"/>
    <property type="match status" value="1"/>
</dbReference>
<dbReference type="PANTHER" id="PTHR30555">
    <property type="entry name" value="HYDROPEROXIDASE I, BIFUNCTIONAL CATALASE-PEROXIDASE"/>
    <property type="match status" value="1"/>
</dbReference>
<dbReference type="Pfam" id="PF00141">
    <property type="entry name" value="peroxidase"/>
    <property type="match status" value="2"/>
</dbReference>
<dbReference type="PRINTS" id="PR00460">
    <property type="entry name" value="BPEROXIDASE"/>
</dbReference>
<dbReference type="PRINTS" id="PR00458">
    <property type="entry name" value="PEROXIDASE"/>
</dbReference>
<dbReference type="SUPFAM" id="SSF48113">
    <property type="entry name" value="Heme-dependent peroxidases"/>
    <property type="match status" value="2"/>
</dbReference>
<dbReference type="PROSITE" id="PS00435">
    <property type="entry name" value="PEROXIDASE_1"/>
    <property type="match status" value="1"/>
</dbReference>
<dbReference type="PROSITE" id="PS00436">
    <property type="entry name" value="PEROXIDASE_2"/>
    <property type="match status" value="1"/>
</dbReference>
<dbReference type="PROSITE" id="PS50873">
    <property type="entry name" value="PEROXIDASE_4"/>
    <property type="match status" value="1"/>
</dbReference>
<proteinExistence type="inferred from homology"/>
<sequence length="732" mass="81767">MSEQGKCPVTGRTAVNPVTTGGMSNRDWWPNQLHLDMLHQHSSLTNPMGEEFRYKEEFKKLDLKSVKKDLYALMTDSQEWWPADYGHYGGLFIRMAWHSAGTYRTSDGRGGGGTGNQRFAPLNSWPDNANLDKARRLLWPIKQKYGRKLSWADLMILAGNCALESMGFKTFGFGGGRVDIWEPEEDIYWGKEVEWLGSNRYSGERDLENPLAAVQMGLIYVNPEGPDGNPDPVAAGRDIRETFARMAMNDEETVALVAGGHTFGKCHGVGDPKLIGPEPEAAEIEEQGLGWKSGYGSGKGDETMTSGLEGAWTPDPIHWDMGYLGMLFKYEWELTKSPAGAWQWKPKDVAEEDLAPAAHDPSKRVPTMMTTADLAMRMDPLYGPIARRYYEHPEQFADAFARAWFKLTHRDMGPRSRYLGAEVPAEELIWQDPVPAVDHELIGEGKIKELKKRILASGLSIPELLSTAWASASTFRSSDKRGGANGSRIRLSPQKEWEVNQPEQLQRVLGKLEEIRNAFNGEQSGGKQVSLADLIVLGGCAAVEEAARRAGNDVTVPFIPGRTDASQEQTDVESFAVLEPLADGFRNYTKRKYSVTPEEMLIDRSQLLTLTATEMTVLLGGLRVLGVNFRQSPHGLFTNRPETLTNDFFVNLLDMGTEWKPLSKEHETFEGRDRKTGEVRWSATRVDLIFGSNARLRAIAEVYGSDDAQGKFVQDFVAAWNKVMNLDRFDLS</sequence>
<comment type="function">
    <text evidence="1">Bifunctional enzyme with both catalase and broad-spectrum peroxidase activity.</text>
</comment>
<comment type="catalytic activity">
    <reaction evidence="1">
        <text>H2O2 + AH2 = A + 2 H2O</text>
        <dbReference type="Rhea" id="RHEA:30275"/>
        <dbReference type="ChEBI" id="CHEBI:13193"/>
        <dbReference type="ChEBI" id="CHEBI:15377"/>
        <dbReference type="ChEBI" id="CHEBI:16240"/>
        <dbReference type="ChEBI" id="CHEBI:17499"/>
        <dbReference type="EC" id="1.11.1.21"/>
    </reaction>
</comment>
<comment type="catalytic activity">
    <reaction evidence="1">
        <text>2 H2O2 = O2 + 2 H2O</text>
        <dbReference type="Rhea" id="RHEA:20309"/>
        <dbReference type="ChEBI" id="CHEBI:15377"/>
        <dbReference type="ChEBI" id="CHEBI:15379"/>
        <dbReference type="ChEBI" id="CHEBI:16240"/>
        <dbReference type="EC" id="1.11.1.21"/>
    </reaction>
</comment>
<comment type="cofactor">
    <cofactor evidence="1">
        <name>heme b</name>
        <dbReference type="ChEBI" id="CHEBI:60344"/>
    </cofactor>
    <text evidence="1">Binds 1 heme b (iron(II)-protoporphyrin IX) group per dimer.</text>
</comment>
<comment type="subunit">
    <text evidence="1">Homodimer or homotetramer.</text>
</comment>
<comment type="PTM">
    <text evidence="1">Formation of the three residue Trp-Tyr-Met cross-link is important for the catalase, but not the peroxidase activity of the enzyme.</text>
</comment>
<comment type="similarity">
    <text evidence="1">Belongs to the peroxidase family. Peroxidase/catalase subfamily.</text>
</comment>
<feature type="chain" id="PRO_0000354857" description="Catalase-peroxidase">
    <location>
        <begin position="1"/>
        <end position="732"/>
    </location>
</feature>
<feature type="active site" description="Proton acceptor" evidence="1">
    <location>
        <position position="98"/>
    </location>
</feature>
<feature type="binding site" description="axial binding residue" evidence="1">
    <location>
        <position position="261"/>
    </location>
    <ligand>
        <name>heme b</name>
        <dbReference type="ChEBI" id="CHEBI:60344"/>
    </ligand>
    <ligandPart>
        <name>Fe</name>
        <dbReference type="ChEBI" id="CHEBI:18248"/>
    </ligandPart>
</feature>
<feature type="site" description="Transition state stabilizer" evidence="1">
    <location>
        <position position="94"/>
    </location>
</feature>
<feature type="cross-link" description="Tryptophyl-tyrosyl-methioninium (Trp-Tyr) (with M-246)" evidence="1">
    <location>
        <begin position="97"/>
        <end position="220"/>
    </location>
</feature>
<feature type="cross-link" description="Tryptophyl-tyrosyl-methioninium (Tyr-Met) (with W-97)" evidence="1">
    <location>
        <begin position="220"/>
        <end position="246"/>
    </location>
</feature>
<organism>
    <name type="scientific">Pelodictyon phaeoclathratiforme (strain DSM 5477 / BU-1)</name>
    <dbReference type="NCBI Taxonomy" id="324925"/>
    <lineage>
        <taxon>Bacteria</taxon>
        <taxon>Pseudomonadati</taxon>
        <taxon>Chlorobiota</taxon>
        <taxon>Chlorobiia</taxon>
        <taxon>Chlorobiales</taxon>
        <taxon>Chlorobiaceae</taxon>
        <taxon>Chlorobium/Pelodictyon group</taxon>
        <taxon>Pelodictyon</taxon>
    </lineage>
</organism>
<name>KATG_PELPB</name>
<keyword id="KW-0349">Heme</keyword>
<keyword id="KW-0376">Hydrogen peroxide</keyword>
<keyword id="KW-0408">Iron</keyword>
<keyword id="KW-0479">Metal-binding</keyword>
<keyword id="KW-0560">Oxidoreductase</keyword>
<keyword id="KW-0575">Peroxidase</keyword>
<keyword id="KW-1185">Reference proteome</keyword>
<protein>
    <recommendedName>
        <fullName evidence="1">Catalase-peroxidase</fullName>
        <shortName evidence="1">CP</shortName>
        <ecNumber evidence="1">1.11.1.21</ecNumber>
    </recommendedName>
    <alternativeName>
        <fullName evidence="1">Peroxidase/catalase</fullName>
    </alternativeName>
</protein>
<accession>B4SAT7</accession>
<gene>
    <name evidence="1" type="primary">katG</name>
    <name type="ordered locus">Ppha_0100</name>
</gene>
<reference key="1">
    <citation type="submission" date="2008-06" db="EMBL/GenBank/DDBJ databases">
        <title>Complete sequence of Pelodictyon phaeoclathratiforme BU-1.</title>
        <authorList>
            <consortium name="US DOE Joint Genome Institute"/>
            <person name="Lucas S."/>
            <person name="Copeland A."/>
            <person name="Lapidus A."/>
            <person name="Glavina del Rio T."/>
            <person name="Dalin E."/>
            <person name="Tice H."/>
            <person name="Bruce D."/>
            <person name="Goodwin L."/>
            <person name="Pitluck S."/>
            <person name="Schmutz J."/>
            <person name="Larimer F."/>
            <person name="Land M."/>
            <person name="Hauser L."/>
            <person name="Kyrpides N."/>
            <person name="Mikhailova N."/>
            <person name="Liu Z."/>
            <person name="Li T."/>
            <person name="Zhao F."/>
            <person name="Overmann J."/>
            <person name="Bryant D.A."/>
            <person name="Richardson P."/>
        </authorList>
    </citation>
    <scope>NUCLEOTIDE SEQUENCE [LARGE SCALE GENOMIC DNA]</scope>
    <source>
        <strain>DSM 5477 / BU-1</strain>
    </source>
</reference>
<evidence type="ECO:0000255" key="1">
    <source>
        <dbReference type="HAMAP-Rule" id="MF_01961"/>
    </source>
</evidence>